<reference key="1">
    <citation type="journal article" date="1990" name="J. Bacteriol.">
        <title>Sequence and expression of the Escherichia coli recR locus.</title>
        <authorList>
            <person name="Yeung T."/>
            <person name="Mullin D.A."/>
            <person name="Chen K.S."/>
            <person name="Craig E.A."/>
            <person name="Bardwell J.C.A."/>
            <person name="Walker J.R."/>
        </authorList>
    </citation>
    <scope>NUCLEOTIDE SEQUENCE [GENOMIC DNA]</scope>
    <source>
        <strain>K12</strain>
    </source>
</reference>
<reference key="2">
    <citation type="journal article" date="1989" name="Nucleic Acids Res.">
        <title>The recR locus of Escherichia coli K-12: molecular cloning, DNA sequencing and identification of the gene product.</title>
        <authorList>
            <person name="Mahdi A.A."/>
            <person name="Lloyd R.G."/>
        </authorList>
    </citation>
    <scope>NUCLEOTIDE SEQUENCE [GENOMIC DNA]</scope>
    <source>
        <strain>K12</strain>
    </source>
</reference>
<reference key="3">
    <citation type="submission" date="1997-01" db="EMBL/GenBank/DDBJ databases">
        <title>Sequence of minutes 4-25 of Escherichia coli.</title>
        <authorList>
            <person name="Chung E."/>
            <person name="Allen E."/>
            <person name="Araujo R."/>
            <person name="Aparicio A.M."/>
            <person name="Davis K."/>
            <person name="Duncan M."/>
            <person name="Federspiel N."/>
            <person name="Hyman R."/>
            <person name="Kalman S."/>
            <person name="Komp C."/>
            <person name="Kurdi O."/>
            <person name="Lew H."/>
            <person name="Lin D."/>
            <person name="Namath A."/>
            <person name="Oefner P."/>
            <person name="Roberts D."/>
            <person name="Schramm S."/>
            <person name="Davis R.W."/>
        </authorList>
    </citation>
    <scope>NUCLEOTIDE SEQUENCE [LARGE SCALE GENOMIC DNA]</scope>
    <source>
        <strain>K12 / MG1655 / ATCC 47076</strain>
    </source>
</reference>
<reference key="4">
    <citation type="journal article" date="1997" name="Science">
        <title>The complete genome sequence of Escherichia coli K-12.</title>
        <authorList>
            <person name="Blattner F.R."/>
            <person name="Plunkett G. III"/>
            <person name="Bloch C.A."/>
            <person name="Perna N.T."/>
            <person name="Burland V."/>
            <person name="Riley M."/>
            <person name="Collado-Vides J."/>
            <person name="Glasner J.D."/>
            <person name="Rode C.K."/>
            <person name="Mayhew G.F."/>
            <person name="Gregor J."/>
            <person name="Davis N.W."/>
            <person name="Kirkpatrick H.A."/>
            <person name="Goeden M.A."/>
            <person name="Rose D.J."/>
            <person name="Mau B."/>
            <person name="Shao Y."/>
        </authorList>
    </citation>
    <scope>NUCLEOTIDE SEQUENCE [LARGE SCALE GENOMIC DNA]</scope>
    <source>
        <strain>K12 / MG1655 / ATCC 47076</strain>
    </source>
</reference>
<reference key="5">
    <citation type="journal article" date="2006" name="Mol. Syst. Biol.">
        <title>Highly accurate genome sequences of Escherichia coli K-12 strains MG1655 and W3110.</title>
        <authorList>
            <person name="Hayashi K."/>
            <person name="Morooka N."/>
            <person name="Yamamoto Y."/>
            <person name="Fujita K."/>
            <person name="Isono K."/>
            <person name="Choi S."/>
            <person name="Ohtsubo E."/>
            <person name="Baba T."/>
            <person name="Wanner B.L."/>
            <person name="Mori H."/>
            <person name="Horiuchi T."/>
        </authorList>
    </citation>
    <scope>NUCLEOTIDE SEQUENCE [LARGE SCALE GENOMIC DNA]</scope>
    <source>
        <strain>K12 / W3110 / ATCC 27325 / DSM 5911</strain>
    </source>
</reference>
<evidence type="ECO:0000255" key="1">
    <source>
        <dbReference type="HAMAP-Rule" id="MF_00017"/>
    </source>
</evidence>
<evidence type="ECO:0000305" key="2"/>
<sequence length="201" mass="21963">MQTSPLLTQLMEALRCLPGVGPKSAQRMAFTLLQRDRSGGMRLAQALTRAMSEIGHCADCRTFTEQEVCNICSNPRRQENGQICVVESPADIYAIEQTGQFSGRYFVLMGHLSPLDGIGPDDIGLDRLEQRLAEEKITEVILATNPTVEGEATANYIAELCAQYDVEASRIAHGVPVGGELEMVDGTTLSHSLAGRHKIRF</sequence>
<organism>
    <name type="scientific">Escherichia coli (strain K12)</name>
    <dbReference type="NCBI Taxonomy" id="83333"/>
    <lineage>
        <taxon>Bacteria</taxon>
        <taxon>Pseudomonadati</taxon>
        <taxon>Pseudomonadota</taxon>
        <taxon>Gammaproteobacteria</taxon>
        <taxon>Enterobacterales</taxon>
        <taxon>Enterobacteriaceae</taxon>
        <taxon>Escherichia</taxon>
    </lineage>
</organism>
<gene>
    <name evidence="1" type="primary">recR</name>
    <name type="ordered locus">b0472</name>
    <name type="ordered locus">JW0461</name>
</gene>
<comment type="function">
    <text>May play a role in DNA repair. It seems to be involved in an RecBC-independent recombinational process of DNA repair. It may act with RecF and RecO.</text>
</comment>
<comment type="interaction">
    <interactant intactId="EBI-1117436">
        <id>P0A7H6</id>
    </interactant>
    <interactant intactId="EBI-1129540">
        <id>P0A7H3</id>
        <label>recO</label>
    </interactant>
    <organismsDiffer>false</organismsDiffer>
    <experiments>3</experiments>
</comment>
<comment type="similarity">
    <text evidence="1">Belongs to the RecR family.</text>
</comment>
<accession>P0A7H6</accession>
<accession>P12727</accession>
<accession>Q2MBV5</accession>
<name>RECR_ECOLI</name>
<feature type="chain" id="PRO_0000190316" description="Recombination protein RecR">
    <location>
        <begin position="1"/>
        <end position="201"/>
    </location>
</feature>
<feature type="domain" description="Toprim" evidence="1">
    <location>
        <begin position="81"/>
        <end position="176"/>
    </location>
</feature>
<feature type="zinc finger region" description="C4-type" evidence="1">
    <location>
        <begin position="57"/>
        <end position="72"/>
    </location>
</feature>
<feature type="sequence conflict" description="In Ref. 1; AAA23459." evidence="2" ref="1">
    <original>L</original>
    <variation>V</variation>
    <location>
        <position position="32"/>
    </location>
</feature>
<dbReference type="EMBL" id="X15761">
    <property type="protein sequence ID" value="CAA33768.1"/>
    <property type="molecule type" value="Genomic_DNA"/>
</dbReference>
<dbReference type="EMBL" id="M38777">
    <property type="protein sequence ID" value="AAA23459.1"/>
    <property type="molecule type" value="Genomic_DNA"/>
</dbReference>
<dbReference type="EMBL" id="U82664">
    <property type="protein sequence ID" value="AAB40226.1"/>
    <property type="molecule type" value="Genomic_DNA"/>
</dbReference>
<dbReference type="EMBL" id="U00096">
    <property type="protein sequence ID" value="AAC73574.1"/>
    <property type="molecule type" value="Genomic_DNA"/>
</dbReference>
<dbReference type="EMBL" id="AP009048">
    <property type="protein sequence ID" value="BAE76251.1"/>
    <property type="molecule type" value="Genomic_DNA"/>
</dbReference>
<dbReference type="PIR" id="JU0106">
    <property type="entry name" value="BVECRR"/>
</dbReference>
<dbReference type="RefSeq" id="NP_415005.1">
    <property type="nucleotide sequence ID" value="NC_000913.3"/>
</dbReference>
<dbReference type="RefSeq" id="WP_001195025.1">
    <property type="nucleotide sequence ID" value="NZ_STEB01000007.1"/>
</dbReference>
<dbReference type="SMR" id="P0A7H6"/>
<dbReference type="BioGRID" id="4261966">
    <property type="interactions" value="181"/>
</dbReference>
<dbReference type="ComplexPortal" id="CPX-5126">
    <property type="entry name" value="RecOR complex"/>
</dbReference>
<dbReference type="DIP" id="DIP-341N"/>
<dbReference type="FunCoup" id="P0A7H6">
    <property type="interactions" value="306"/>
</dbReference>
<dbReference type="IntAct" id="P0A7H6">
    <property type="interactions" value="6"/>
</dbReference>
<dbReference type="STRING" id="511145.b0472"/>
<dbReference type="jPOST" id="P0A7H6"/>
<dbReference type="PaxDb" id="511145-b0472"/>
<dbReference type="EnsemblBacteria" id="AAC73574">
    <property type="protein sequence ID" value="AAC73574"/>
    <property type="gene ID" value="b0472"/>
</dbReference>
<dbReference type="GeneID" id="93776978"/>
<dbReference type="GeneID" id="945100"/>
<dbReference type="KEGG" id="ecj:JW0461"/>
<dbReference type="KEGG" id="eco:b0472"/>
<dbReference type="KEGG" id="ecoc:C3026_02320"/>
<dbReference type="PATRIC" id="fig|1411691.4.peg.1804"/>
<dbReference type="EchoBASE" id="EB0827"/>
<dbReference type="eggNOG" id="COG0353">
    <property type="taxonomic scope" value="Bacteria"/>
</dbReference>
<dbReference type="HOGENOM" id="CLU_060739_1_2_6"/>
<dbReference type="InParanoid" id="P0A7H6"/>
<dbReference type="OMA" id="DVMAIEN"/>
<dbReference type="OrthoDB" id="9802672at2"/>
<dbReference type="PhylomeDB" id="P0A7H6"/>
<dbReference type="BioCyc" id="EcoCyc:EG10834-MONOMER"/>
<dbReference type="BioCyc" id="MetaCyc:EG10834-MONOMER"/>
<dbReference type="PRO" id="PR:P0A7H6"/>
<dbReference type="Proteomes" id="UP000000625">
    <property type="component" value="Chromosome"/>
</dbReference>
<dbReference type="GO" id="GO:0003677">
    <property type="term" value="F:DNA binding"/>
    <property type="evidence" value="ECO:0007669"/>
    <property type="project" value="UniProtKB-UniRule"/>
</dbReference>
<dbReference type="GO" id="GO:0008270">
    <property type="term" value="F:zinc ion binding"/>
    <property type="evidence" value="ECO:0007669"/>
    <property type="project" value="UniProtKB-KW"/>
</dbReference>
<dbReference type="GO" id="GO:0006310">
    <property type="term" value="P:DNA recombination"/>
    <property type="evidence" value="ECO:0000314"/>
    <property type="project" value="ComplexPortal"/>
</dbReference>
<dbReference type="GO" id="GO:0000731">
    <property type="term" value="P:DNA synthesis involved in DNA repair"/>
    <property type="evidence" value="ECO:0000315"/>
    <property type="project" value="EcoliWiki"/>
</dbReference>
<dbReference type="GO" id="GO:0006302">
    <property type="term" value="P:double-strand break repair"/>
    <property type="evidence" value="ECO:0000318"/>
    <property type="project" value="GO_Central"/>
</dbReference>
<dbReference type="GO" id="GO:0000725">
    <property type="term" value="P:recombinational repair"/>
    <property type="evidence" value="ECO:0000314"/>
    <property type="project" value="EcoCyc"/>
</dbReference>
<dbReference type="GO" id="GO:0009411">
    <property type="term" value="P:response to UV"/>
    <property type="evidence" value="ECO:0000315"/>
    <property type="project" value="EcoliWiki"/>
</dbReference>
<dbReference type="CDD" id="cd01025">
    <property type="entry name" value="TOPRIM_recR"/>
    <property type="match status" value="1"/>
</dbReference>
<dbReference type="FunFam" id="1.10.8.420:FF:000001">
    <property type="entry name" value="Recombination protein RecR"/>
    <property type="match status" value="1"/>
</dbReference>
<dbReference type="FunFam" id="3.40.1360.10:FF:000001">
    <property type="entry name" value="Recombination protein RecR"/>
    <property type="match status" value="1"/>
</dbReference>
<dbReference type="Gene3D" id="3.40.1360.10">
    <property type="match status" value="1"/>
</dbReference>
<dbReference type="Gene3D" id="6.10.250.240">
    <property type="match status" value="1"/>
</dbReference>
<dbReference type="Gene3D" id="1.10.8.420">
    <property type="entry name" value="RecR Domain 1"/>
    <property type="match status" value="1"/>
</dbReference>
<dbReference type="HAMAP" id="MF_00017">
    <property type="entry name" value="RecR"/>
    <property type="match status" value="1"/>
</dbReference>
<dbReference type="InterPro" id="IPR000093">
    <property type="entry name" value="DNA_Rcmb_RecR"/>
</dbReference>
<dbReference type="InterPro" id="IPR023627">
    <property type="entry name" value="Rcmb_RecR"/>
</dbReference>
<dbReference type="InterPro" id="IPR015967">
    <property type="entry name" value="Rcmb_RecR_Znf"/>
</dbReference>
<dbReference type="InterPro" id="IPR006171">
    <property type="entry name" value="TOPRIM_dom"/>
</dbReference>
<dbReference type="InterPro" id="IPR034137">
    <property type="entry name" value="TOPRIM_RecR"/>
</dbReference>
<dbReference type="NCBIfam" id="TIGR00615">
    <property type="entry name" value="recR"/>
    <property type="match status" value="1"/>
</dbReference>
<dbReference type="PANTHER" id="PTHR30446">
    <property type="entry name" value="RECOMBINATION PROTEIN RECR"/>
    <property type="match status" value="1"/>
</dbReference>
<dbReference type="PANTHER" id="PTHR30446:SF0">
    <property type="entry name" value="RECOMBINATION PROTEIN RECR"/>
    <property type="match status" value="1"/>
</dbReference>
<dbReference type="Pfam" id="PF21175">
    <property type="entry name" value="RecR_C"/>
    <property type="match status" value="1"/>
</dbReference>
<dbReference type="Pfam" id="PF21176">
    <property type="entry name" value="RecR_HhH"/>
    <property type="match status" value="1"/>
</dbReference>
<dbReference type="Pfam" id="PF02132">
    <property type="entry name" value="RecR_ZnF"/>
    <property type="match status" value="1"/>
</dbReference>
<dbReference type="Pfam" id="PF13662">
    <property type="entry name" value="Toprim_4"/>
    <property type="match status" value="1"/>
</dbReference>
<dbReference type="SMART" id="SM00493">
    <property type="entry name" value="TOPRIM"/>
    <property type="match status" value="1"/>
</dbReference>
<dbReference type="SUPFAM" id="SSF111304">
    <property type="entry name" value="Recombination protein RecR"/>
    <property type="match status" value="1"/>
</dbReference>
<dbReference type="PROSITE" id="PS01300">
    <property type="entry name" value="RECR"/>
    <property type="match status" value="1"/>
</dbReference>
<dbReference type="PROSITE" id="PS50880">
    <property type="entry name" value="TOPRIM"/>
    <property type="match status" value="1"/>
</dbReference>
<protein>
    <recommendedName>
        <fullName evidence="1">Recombination protein RecR</fullName>
    </recommendedName>
</protein>
<keyword id="KW-0227">DNA damage</keyword>
<keyword id="KW-0233">DNA recombination</keyword>
<keyword id="KW-0234">DNA repair</keyword>
<keyword id="KW-0479">Metal-binding</keyword>
<keyword id="KW-1185">Reference proteome</keyword>
<keyword id="KW-0862">Zinc</keyword>
<keyword id="KW-0863">Zinc-finger</keyword>
<proteinExistence type="evidence at protein level"/>